<keyword id="KW-0028">Amino-acid biosynthesis</keyword>
<keyword id="KW-0057">Aromatic amino acid biosynthesis</keyword>
<keyword id="KW-0210">Decarboxylase</keyword>
<keyword id="KW-0456">Lyase</keyword>
<keyword id="KW-0822">Tryptophan biosynthesis</keyword>
<dbReference type="EC" id="4.1.1.48" evidence="1"/>
<dbReference type="EMBL" id="CP000539">
    <property type="protein sequence ID" value="ABM40623.1"/>
    <property type="molecule type" value="Genomic_DNA"/>
</dbReference>
<dbReference type="SMR" id="A1W2Z8"/>
<dbReference type="STRING" id="232721.Ajs_0370"/>
<dbReference type="KEGG" id="ajs:Ajs_0370"/>
<dbReference type="eggNOG" id="COG0134">
    <property type="taxonomic scope" value="Bacteria"/>
</dbReference>
<dbReference type="HOGENOM" id="CLU_034247_2_0_4"/>
<dbReference type="UniPathway" id="UPA00035">
    <property type="reaction ID" value="UER00043"/>
</dbReference>
<dbReference type="Proteomes" id="UP000000645">
    <property type="component" value="Chromosome"/>
</dbReference>
<dbReference type="GO" id="GO:0004425">
    <property type="term" value="F:indole-3-glycerol-phosphate synthase activity"/>
    <property type="evidence" value="ECO:0007669"/>
    <property type="project" value="UniProtKB-UniRule"/>
</dbReference>
<dbReference type="GO" id="GO:0004640">
    <property type="term" value="F:phosphoribosylanthranilate isomerase activity"/>
    <property type="evidence" value="ECO:0007669"/>
    <property type="project" value="TreeGrafter"/>
</dbReference>
<dbReference type="GO" id="GO:0000162">
    <property type="term" value="P:L-tryptophan biosynthetic process"/>
    <property type="evidence" value="ECO:0007669"/>
    <property type="project" value="UniProtKB-UniRule"/>
</dbReference>
<dbReference type="CDD" id="cd00331">
    <property type="entry name" value="IGPS"/>
    <property type="match status" value="1"/>
</dbReference>
<dbReference type="FunFam" id="3.20.20.70:FF:000024">
    <property type="entry name" value="Indole-3-glycerol phosphate synthase"/>
    <property type="match status" value="1"/>
</dbReference>
<dbReference type="Gene3D" id="3.20.20.70">
    <property type="entry name" value="Aldolase class I"/>
    <property type="match status" value="1"/>
</dbReference>
<dbReference type="HAMAP" id="MF_00134_B">
    <property type="entry name" value="IGPS_B"/>
    <property type="match status" value="1"/>
</dbReference>
<dbReference type="InterPro" id="IPR013785">
    <property type="entry name" value="Aldolase_TIM"/>
</dbReference>
<dbReference type="InterPro" id="IPR045186">
    <property type="entry name" value="Indole-3-glycerol_P_synth"/>
</dbReference>
<dbReference type="InterPro" id="IPR013798">
    <property type="entry name" value="Indole-3-glycerol_P_synth_dom"/>
</dbReference>
<dbReference type="InterPro" id="IPR001468">
    <property type="entry name" value="Indole-3-GlycerolPSynthase_CS"/>
</dbReference>
<dbReference type="InterPro" id="IPR011060">
    <property type="entry name" value="RibuloseP-bd_barrel"/>
</dbReference>
<dbReference type="NCBIfam" id="NF001370">
    <property type="entry name" value="PRK00278.1-2"/>
    <property type="match status" value="1"/>
</dbReference>
<dbReference type="NCBIfam" id="NF001373">
    <property type="entry name" value="PRK00278.1-6"/>
    <property type="match status" value="1"/>
</dbReference>
<dbReference type="NCBIfam" id="NF001377">
    <property type="entry name" value="PRK00278.2-4"/>
    <property type="match status" value="1"/>
</dbReference>
<dbReference type="PANTHER" id="PTHR22854:SF2">
    <property type="entry name" value="INDOLE-3-GLYCEROL-PHOSPHATE SYNTHASE"/>
    <property type="match status" value="1"/>
</dbReference>
<dbReference type="PANTHER" id="PTHR22854">
    <property type="entry name" value="TRYPTOPHAN BIOSYNTHESIS PROTEIN"/>
    <property type="match status" value="1"/>
</dbReference>
<dbReference type="Pfam" id="PF00218">
    <property type="entry name" value="IGPS"/>
    <property type="match status" value="1"/>
</dbReference>
<dbReference type="SUPFAM" id="SSF51366">
    <property type="entry name" value="Ribulose-phoshate binding barrel"/>
    <property type="match status" value="1"/>
</dbReference>
<dbReference type="PROSITE" id="PS00614">
    <property type="entry name" value="IGPS"/>
    <property type="match status" value="1"/>
</dbReference>
<accession>A1W2Z8</accession>
<reference key="1">
    <citation type="submission" date="2006-12" db="EMBL/GenBank/DDBJ databases">
        <title>Complete sequence of chromosome 1 of Acidovorax sp. JS42.</title>
        <authorList>
            <person name="Copeland A."/>
            <person name="Lucas S."/>
            <person name="Lapidus A."/>
            <person name="Barry K."/>
            <person name="Detter J.C."/>
            <person name="Glavina del Rio T."/>
            <person name="Dalin E."/>
            <person name="Tice H."/>
            <person name="Pitluck S."/>
            <person name="Chertkov O."/>
            <person name="Brettin T."/>
            <person name="Bruce D."/>
            <person name="Han C."/>
            <person name="Tapia R."/>
            <person name="Gilna P."/>
            <person name="Schmutz J."/>
            <person name="Larimer F."/>
            <person name="Land M."/>
            <person name="Hauser L."/>
            <person name="Kyrpides N."/>
            <person name="Kim E."/>
            <person name="Stahl D."/>
            <person name="Richardson P."/>
        </authorList>
    </citation>
    <scope>NUCLEOTIDE SEQUENCE [LARGE SCALE GENOMIC DNA]</scope>
    <source>
        <strain>JS42</strain>
    </source>
</reference>
<sequence length="266" mass="29106">MSDILKKICDVKVEEVAAAQKRVSFTDMRRDAESRVLTRDFVGALRAKIDQGQAGVIAEIKKASPSKGVIREDFIPADIAQSYAEGDGKVGAACLSVLTDRQFFQGQPDYLKQARASCPLPVLRKDFMIDPYQIYESRAFGADCVLLIAACLEDGLMAEMEQIARSLDMAVLVEVHDGAELERALRLQTPLVGINNRNLRTFEVSLQTTLDLKKEVPADRLLVAESGILAPVDVHTLRDAGVNAFLVGEAFMRAPDPGRALAQLFA</sequence>
<name>TRPC_ACISJ</name>
<proteinExistence type="inferred from homology"/>
<comment type="catalytic activity">
    <reaction evidence="1">
        <text>1-(2-carboxyphenylamino)-1-deoxy-D-ribulose 5-phosphate + H(+) = (1S,2R)-1-C-(indol-3-yl)glycerol 3-phosphate + CO2 + H2O</text>
        <dbReference type="Rhea" id="RHEA:23476"/>
        <dbReference type="ChEBI" id="CHEBI:15377"/>
        <dbReference type="ChEBI" id="CHEBI:15378"/>
        <dbReference type="ChEBI" id="CHEBI:16526"/>
        <dbReference type="ChEBI" id="CHEBI:58613"/>
        <dbReference type="ChEBI" id="CHEBI:58866"/>
        <dbReference type="EC" id="4.1.1.48"/>
    </reaction>
</comment>
<comment type="pathway">
    <text evidence="1">Amino-acid biosynthesis; L-tryptophan biosynthesis; L-tryptophan from chorismate: step 4/5.</text>
</comment>
<comment type="similarity">
    <text evidence="1">Belongs to the TrpC family.</text>
</comment>
<feature type="chain" id="PRO_1000018430" description="Indole-3-glycerol phosphate synthase">
    <location>
        <begin position="1"/>
        <end position="266"/>
    </location>
</feature>
<organism>
    <name type="scientific">Acidovorax sp. (strain JS42)</name>
    <dbReference type="NCBI Taxonomy" id="232721"/>
    <lineage>
        <taxon>Bacteria</taxon>
        <taxon>Pseudomonadati</taxon>
        <taxon>Pseudomonadota</taxon>
        <taxon>Betaproteobacteria</taxon>
        <taxon>Burkholderiales</taxon>
        <taxon>Comamonadaceae</taxon>
        <taxon>Acidovorax</taxon>
    </lineage>
</organism>
<gene>
    <name evidence="1" type="primary">trpC</name>
    <name type="ordered locus">Ajs_0370</name>
</gene>
<protein>
    <recommendedName>
        <fullName evidence="1">Indole-3-glycerol phosphate synthase</fullName>
        <shortName evidence="1">IGPS</shortName>
        <ecNumber evidence="1">4.1.1.48</ecNumber>
    </recommendedName>
</protein>
<evidence type="ECO:0000255" key="1">
    <source>
        <dbReference type="HAMAP-Rule" id="MF_00134"/>
    </source>
</evidence>